<name>Y3479_RHOPA</name>
<gene>
    <name type="ordered locus">RPA3479</name>
</gene>
<evidence type="ECO:0000255" key="1">
    <source>
        <dbReference type="HAMAP-Rule" id="MF_00657"/>
    </source>
</evidence>
<proteinExistence type="inferred from homology"/>
<comment type="cofactor">
    <cofactor evidence="1">
        <name>Fe(2+)</name>
        <dbReference type="ChEBI" id="CHEBI:29033"/>
    </cofactor>
    <text evidence="1">Binds 1 Fe(2+) ion per subunit.</text>
</comment>
<comment type="cofactor">
    <cofactor evidence="1">
        <name>L-ascorbate</name>
        <dbReference type="ChEBI" id="CHEBI:38290"/>
    </cofactor>
</comment>
<sequence length="229" mass="25318">MLVCIPEVLPKSEVAEFRRLMDAADWEDGRSTAGAQSAMVKRNEQLPPDSDLARALGRRIVSALTGNPKFVSAAVPLQIFPPLFNRYAASGGHHFGIHVDNAVRGDHLTGLRIRTDLSVTLFLAEPDEYDGGELVIEDTYGSHEVKLAAGDAVLYPSTSLHMVTPVTRGARVASFFWLQSMIRDAQARSMIYDLDNAIQALVERLGRDDPETVKLTGIYHNLIRYWAEV</sequence>
<reference key="1">
    <citation type="journal article" date="2004" name="Nat. Biotechnol.">
        <title>Complete genome sequence of the metabolically versatile photosynthetic bacterium Rhodopseudomonas palustris.</title>
        <authorList>
            <person name="Larimer F.W."/>
            <person name="Chain P."/>
            <person name="Hauser L."/>
            <person name="Lamerdin J.E."/>
            <person name="Malfatti S."/>
            <person name="Do L."/>
            <person name="Land M.L."/>
            <person name="Pelletier D.A."/>
            <person name="Beatty J.T."/>
            <person name="Lang A.S."/>
            <person name="Tabita F.R."/>
            <person name="Gibson J.L."/>
            <person name="Hanson T.E."/>
            <person name="Bobst C."/>
            <person name="Torres y Torres J.L."/>
            <person name="Peres C."/>
            <person name="Harrison F.H."/>
            <person name="Gibson J."/>
            <person name="Harwood C.S."/>
        </authorList>
    </citation>
    <scope>NUCLEOTIDE SEQUENCE [LARGE SCALE GENOMIC DNA]</scope>
    <source>
        <strain>ATCC BAA-98 / CGA009</strain>
    </source>
</reference>
<organism>
    <name type="scientific">Rhodopseudomonas palustris (strain ATCC BAA-98 / CGA009)</name>
    <dbReference type="NCBI Taxonomy" id="258594"/>
    <lineage>
        <taxon>Bacteria</taxon>
        <taxon>Pseudomonadati</taxon>
        <taxon>Pseudomonadota</taxon>
        <taxon>Alphaproteobacteria</taxon>
        <taxon>Hyphomicrobiales</taxon>
        <taxon>Nitrobacteraceae</taxon>
        <taxon>Rhodopseudomonas</taxon>
    </lineage>
</organism>
<dbReference type="EC" id="1.14.11.-" evidence="1"/>
<dbReference type="EMBL" id="BX572604">
    <property type="protein sequence ID" value="CAE28920.1"/>
    <property type="molecule type" value="Genomic_DNA"/>
</dbReference>
<dbReference type="RefSeq" id="WP_011159019.1">
    <property type="nucleotide sequence ID" value="NZ_CP116810.1"/>
</dbReference>
<dbReference type="SMR" id="Q6N461"/>
<dbReference type="STRING" id="258594.RPA3479"/>
<dbReference type="eggNOG" id="COG3128">
    <property type="taxonomic scope" value="Bacteria"/>
</dbReference>
<dbReference type="HOGENOM" id="CLU_106663_0_0_5"/>
<dbReference type="PhylomeDB" id="Q6N461"/>
<dbReference type="GO" id="GO:0016706">
    <property type="term" value="F:2-oxoglutarate-dependent dioxygenase activity"/>
    <property type="evidence" value="ECO:0007669"/>
    <property type="project" value="UniProtKB-UniRule"/>
</dbReference>
<dbReference type="GO" id="GO:0005506">
    <property type="term" value="F:iron ion binding"/>
    <property type="evidence" value="ECO:0007669"/>
    <property type="project" value="UniProtKB-UniRule"/>
</dbReference>
<dbReference type="GO" id="GO:0031418">
    <property type="term" value="F:L-ascorbic acid binding"/>
    <property type="evidence" value="ECO:0007669"/>
    <property type="project" value="UniProtKB-KW"/>
</dbReference>
<dbReference type="GO" id="GO:0006974">
    <property type="term" value="P:DNA damage response"/>
    <property type="evidence" value="ECO:0007669"/>
    <property type="project" value="TreeGrafter"/>
</dbReference>
<dbReference type="GO" id="GO:0006879">
    <property type="term" value="P:intracellular iron ion homeostasis"/>
    <property type="evidence" value="ECO:0007669"/>
    <property type="project" value="TreeGrafter"/>
</dbReference>
<dbReference type="Gene3D" id="2.60.120.620">
    <property type="entry name" value="q2cbj1_9rhob like domain"/>
    <property type="match status" value="1"/>
</dbReference>
<dbReference type="Gene3D" id="4.10.860.20">
    <property type="entry name" value="Rabenosyn, Rab binding domain"/>
    <property type="match status" value="1"/>
</dbReference>
<dbReference type="HAMAP" id="MF_00657">
    <property type="entry name" value="Hydroxyl_YbiX"/>
    <property type="match status" value="1"/>
</dbReference>
<dbReference type="InterPro" id="IPR005123">
    <property type="entry name" value="Oxoglu/Fe-dep_dioxygenase_dom"/>
</dbReference>
<dbReference type="InterPro" id="IPR041097">
    <property type="entry name" value="PKHD_C"/>
</dbReference>
<dbReference type="InterPro" id="IPR023550">
    <property type="entry name" value="PKHD_hydroxylase"/>
</dbReference>
<dbReference type="InterPro" id="IPR006620">
    <property type="entry name" value="Pro_4_hyd_alph"/>
</dbReference>
<dbReference type="InterPro" id="IPR044862">
    <property type="entry name" value="Pro_4_hyd_alph_FE2OG_OXY"/>
</dbReference>
<dbReference type="NCBIfam" id="NF003973">
    <property type="entry name" value="PRK05467.1-2"/>
    <property type="match status" value="1"/>
</dbReference>
<dbReference type="NCBIfam" id="NF003974">
    <property type="entry name" value="PRK05467.1-3"/>
    <property type="match status" value="1"/>
</dbReference>
<dbReference type="NCBIfam" id="NF003975">
    <property type="entry name" value="PRK05467.1-4"/>
    <property type="match status" value="1"/>
</dbReference>
<dbReference type="PANTHER" id="PTHR41536">
    <property type="entry name" value="PKHD-TYPE HYDROXYLASE YBIX"/>
    <property type="match status" value="1"/>
</dbReference>
<dbReference type="PANTHER" id="PTHR41536:SF1">
    <property type="entry name" value="PKHD-TYPE HYDROXYLASE YBIX"/>
    <property type="match status" value="1"/>
</dbReference>
<dbReference type="Pfam" id="PF13640">
    <property type="entry name" value="2OG-FeII_Oxy_3"/>
    <property type="match status" value="1"/>
</dbReference>
<dbReference type="Pfam" id="PF18331">
    <property type="entry name" value="PKHD_C"/>
    <property type="match status" value="1"/>
</dbReference>
<dbReference type="SMART" id="SM00702">
    <property type="entry name" value="P4Hc"/>
    <property type="match status" value="1"/>
</dbReference>
<dbReference type="SUPFAM" id="SSF51197">
    <property type="entry name" value="Clavaminate synthase-like"/>
    <property type="match status" value="1"/>
</dbReference>
<dbReference type="PROSITE" id="PS51471">
    <property type="entry name" value="FE2OG_OXY"/>
    <property type="match status" value="1"/>
</dbReference>
<protein>
    <recommendedName>
        <fullName evidence="1">PKHD-type hydroxylase RPA3479</fullName>
        <ecNumber evidence="1">1.14.11.-</ecNumber>
    </recommendedName>
</protein>
<feature type="chain" id="PRO_1000061736" description="PKHD-type hydroxylase RPA3479">
    <location>
        <begin position="1"/>
        <end position="229"/>
    </location>
</feature>
<feature type="domain" description="Fe2OG dioxygenase" evidence="1">
    <location>
        <begin position="78"/>
        <end position="180"/>
    </location>
</feature>
<feature type="binding site" evidence="1">
    <location>
        <position position="98"/>
    </location>
    <ligand>
        <name>Fe cation</name>
        <dbReference type="ChEBI" id="CHEBI:24875"/>
    </ligand>
</feature>
<feature type="binding site" evidence="1">
    <location>
        <position position="100"/>
    </location>
    <ligand>
        <name>Fe cation</name>
        <dbReference type="ChEBI" id="CHEBI:24875"/>
    </ligand>
</feature>
<feature type="binding site" evidence="1">
    <location>
        <position position="161"/>
    </location>
    <ligand>
        <name>Fe cation</name>
        <dbReference type="ChEBI" id="CHEBI:24875"/>
    </ligand>
</feature>
<feature type="binding site" evidence="1">
    <location>
        <position position="171"/>
    </location>
    <ligand>
        <name>2-oxoglutarate</name>
        <dbReference type="ChEBI" id="CHEBI:16810"/>
    </ligand>
</feature>
<keyword id="KW-0223">Dioxygenase</keyword>
<keyword id="KW-0408">Iron</keyword>
<keyword id="KW-0479">Metal-binding</keyword>
<keyword id="KW-0560">Oxidoreductase</keyword>
<keyword id="KW-0847">Vitamin C</keyword>
<accession>Q6N461</accession>